<keyword id="KW-0067">ATP-binding</keyword>
<keyword id="KW-0342">GTP-binding</keyword>
<keyword id="KW-0547">Nucleotide-binding</keyword>
<keyword id="KW-0694">RNA-binding</keyword>
<proteinExistence type="inferred from homology"/>
<organism>
    <name type="scientific">Shigella boydii serotype 4 (strain Sb227)</name>
    <dbReference type="NCBI Taxonomy" id="300268"/>
    <lineage>
        <taxon>Bacteria</taxon>
        <taxon>Pseudomonadati</taxon>
        <taxon>Pseudomonadota</taxon>
        <taxon>Gammaproteobacteria</taxon>
        <taxon>Enterobacterales</taxon>
        <taxon>Enterobacteriaceae</taxon>
        <taxon>Shigella</taxon>
    </lineage>
</organism>
<comment type="function">
    <text evidence="1">Modulates the synthesis of GlmS, by affecting the processing and stability of the regulatory small RNA GlmZ. When glucosamine-6-phosphate (GlcN6P) concentrations are high in the cell, RapZ binds GlmZ and targets it to cleavage by RNase E. Consequently, GlmZ is inactivated and unable to activate GlmS synthesis. Under low GlcN6P concentrations, RapZ is sequestered and inactivated by an other regulatory small RNA, GlmY, preventing GlmZ degradation and leading to synthesis of GlmS.</text>
</comment>
<comment type="subunit">
    <text evidence="1">Homotrimer.</text>
</comment>
<comment type="similarity">
    <text evidence="1">Belongs to the RapZ-like family. RapZ subfamily.</text>
</comment>
<gene>
    <name evidence="1" type="primary">rapZ</name>
    <name type="ordered locus">SBO_3177</name>
</gene>
<feature type="chain" id="PRO_0000258997" description="RNase adapter protein RapZ">
    <location>
        <begin position="1"/>
        <end position="284"/>
    </location>
</feature>
<feature type="region of interest" description="RNA-binding" evidence="1">
    <location>
        <begin position="266"/>
        <end position="284"/>
    </location>
</feature>
<feature type="binding site" evidence="1">
    <location>
        <begin position="8"/>
        <end position="15"/>
    </location>
    <ligand>
        <name>ATP</name>
        <dbReference type="ChEBI" id="CHEBI:30616"/>
    </ligand>
</feature>
<feature type="binding site" evidence="1">
    <location>
        <begin position="56"/>
        <end position="59"/>
    </location>
    <ligand>
        <name>GTP</name>
        <dbReference type="ChEBI" id="CHEBI:37565"/>
    </ligand>
</feature>
<protein>
    <recommendedName>
        <fullName evidence="1">RNase adapter protein RapZ</fullName>
    </recommendedName>
</protein>
<sequence>MVLMIVSGRSGSGKSVALRALEDMGFYCVDNLPVVLLPDLARTLADREISAAVSIDVRNMPESPEIFEQAMSNLPDAFSPQLLFLDADRNTLIRRYSDTRRLHPLSSKNLSLESAIDKESDLLEPLRSRADLIVDTSEMSVHELAEMLRTRLLGKRERELTMVFESFGFKHGIPIDADYVFDVRFLPNPHWDPKLRPMTGLDKPVAAFLDRHTEVHNFIYQTRSYLELWLPMLETNNRSYLTVAIGCTGGKHRSVYIAEQLADYFRSRGKNVQSRHRTLEKRKP</sequence>
<dbReference type="EMBL" id="CP000036">
    <property type="protein sequence ID" value="ABB67677.1"/>
    <property type="molecule type" value="Genomic_DNA"/>
</dbReference>
<dbReference type="RefSeq" id="WP_000243741.1">
    <property type="nucleotide sequence ID" value="NC_007613.1"/>
</dbReference>
<dbReference type="SMR" id="Q31W81"/>
<dbReference type="GeneID" id="93778776"/>
<dbReference type="KEGG" id="sbo:SBO_3177"/>
<dbReference type="HOGENOM" id="CLU_059558_1_1_6"/>
<dbReference type="Proteomes" id="UP000007067">
    <property type="component" value="Chromosome"/>
</dbReference>
<dbReference type="GO" id="GO:0005524">
    <property type="term" value="F:ATP binding"/>
    <property type="evidence" value="ECO:0007669"/>
    <property type="project" value="UniProtKB-UniRule"/>
</dbReference>
<dbReference type="GO" id="GO:0005525">
    <property type="term" value="F:GTP binding"/>
    <property type="evidence" value="ECO:0007669"/>
    <property type="project" value="UniProtKB-UniRule"/>
</dbReference>
<dbReference type="GO" id="GO:0003723">
    <property type="term" value="F:RNA binding"/>
    <property type="evidence" value="ECO:0007669"/>
    <property type="project" value="UniProtKB-KW"/>
</dbReference>
<dbReference type="Gene3D" id="3.40.50.300">
    <property type="entry name" value="P-loop containing nucleotide triphosphate hydrolases"/>
    <property type="match status" value="1"/>
</dbReference>
<dbReference type="HAMAP" id="MF_00636">
    <property type="entry name" value="RapZ_like"/>
    <property type="match status" value="1"/>
</dbReference>
<dbReference type="InterPro" id="IPR027417">
    <property type="entry name" value="P-loop_NTPase"/>
</dbReference>
<dbReference type="InterPro" id="IPR005337">
    <property type="entry name" value="RapZ-like"/>
</dbReference>
<dbReference type="InterPro" id="IPR053930">
    <property type="entry name" value="RapZ-like_N"/>
</dbReference>
<dbReference type="InterPro" id="IPR053931">
    <property type="entry name" value="RapZ_C"/>
</dbReference>
<dbReference type="NCBIfam" id="NF003828">
    <property type="entry name" value="PRK05416.1"/>
    <property type="match status" value="1"/>
</dbReference>
<dbReference type="PANTHER" id="PTHR30448">
    <property type="entry name" value="RNASE ADAPTER PROTEIN RAPZ"/>
    <property type="match status" value="1"/>
</dbReference>
<dbReference type="PANTHER" id="PTHR30448:SF0">
    <property type="entry name" value="RNASE ADAPTER PROTEIN RAPZ"/>
    <property type="match status" value="1"/>
</dbReference>
<dbReference type="Pfam" id="PF22740">
    <property type="entry name" value="PapZ_C"/>
    <property type="match status" value="1"/>
</dbReference>
<dbReference type="Pfam" id="PF03668">
    <property type="entry name" value="RapZ-like_N"/>
    <property type="match status" value="1"/>
</dbReference>
<dbReference type="PIRSF" id="PIRSF005052">
    <property type="entry name" value="P-loopkin"/>
    <property type="match status" value="1"/>
</dbReference>
<dbReference type="SUPFAM" id="SSF52540">
    <property type="entry name" value="P-loop containing nucleoside triphosphate hydrolases"/>
    <property type="match status" value="1"/>
</dbReference>
<name>RAPZ_SHIBS</name>
<reference key="1">
    <citation type="journal article" date="2005" name="Nucleic Acids Res.">
        <title>Genome dynamics and diversity of Shigella species, the etiologic agents of bacillary dysentery.</title>
        <authorList>
            <person name="Yang F."/>
            <person name="Yang J."/>
            <person name="Zhang X."/>
            <person name="Chen L."/>
            <person name="Jiang Y."/>
            <person name="Yan Y."/>
            <person name="Tang X."/>
            <person name="Wang J."/>
            <person name="Xiong Z."/>
            <person name="Dong J."/>
            <person name="Xue Y."/>
            <person name="Zhu Y."/>
            <person name="Xu X."/>
            <person name="Sun L."/>
            <person name="Chen S."/>
            <person name="Nie H."/>
            <person name="Peng J."/>
            <person name="Xu J."/>
            <person name="Wang Y."/>
            <person name="Yuan Z."/>
            <person name="Wen Y."/>
            <person name="Yao Z."/>
            <person name="Shen Y."/>
            <person name="Qiang B."/>
            <person name="Hou Y."/>
            <person name="Yu J."/>
            <person name="Jin Q."/>
        </authorList>
    </citation>
    <scope>NUCLEOTIDE SEQUENCE [LARGE SCALE GENOMIC DNA]</scope>
    <source>
        <strain>Sb227</strain>
    </source>
</reference>
<accession>Q31W81</accession>
<evidence type="ECO:0000255" key="1">
    <source>
        <dbReference type="HAMAP-Rule" id="MF_00636"/>
    </source>
</evidence>